<feature type="chain" id="PRO_0000386757" description="Ribosomal RNA small subunit methyltransferase H">
    <location>
        <begin position="1"/>
        <end position="300"/>
    </location>
</feature>
<feature type="binding site" evidence="1">
    <location>
        <begin position="38"/>
        <end position="40"/>
    </location>
    <ligand>
        <name>S-adenosyl-L-methionine</name>
        <dbReference type="ChEBI" id="CHEBI:59789"/>
    </ligand>
</feature>
<feature type="binding site" evidence="1">
    <location>
        <position position="55"/>
    </location>
    <ligand>
        <name>S-adenosyl-L-methionine</name>
        <dbReference type="ChEBI" id="CHEBI:59789"/>
    </ligand>
</feature>
<feature type="binding site" evidence="1">
    <location>
        <position position="85"/>
    </location>
    <ligand>
        <name>S-adenosyl-L-methionine</name>
        <dbReference type="ChEBI" id="CHEBI:59789"/>
    </ligand>
</feature>
<feature type="binding site" evidence="1">
    <location>
        <position position="102"/>
    </location>
    <ligand>
        <name>S-adenosyl-L-methionine</name>
        <dbReference type="ChEBI" id="CHEBI:59789"/>
    </ligand>
</feature>
<feature type="binding site" evidence="1">
    <location>
        <position position="109"/>
    </location>
    <ligand>
        <name>S-adenosyl-L-methionine</name>
        <dbReference type="ChEBI" id="CHEBI:59789"/>
    </ligand>
</feature>
<name>RSMH_BRAHW</name>
<proteinExistence type="inferred from homology"/>
<keyword id="KW-0963">Cytoplasm</keyword>
<keyword id="KW-0489">Methyltransferase</keyword>
<keyword id="KW-0698">rRNA processing</keyword>
<keyword id="KW-0949">S-adenosyl-L-methionine</keyword>
<keyword id="KW-0808">Transferase</keyword>
<accession>C0QWF7</accession>
<dbReference type="EC" id="2.1.1.199" evidence="1"/>
<dbReference type="EMBL" id="CP001357">
    <property type="protein sequence ID" value="ACN82599.1"/>
    <property type="molecule type" value="Genomic_DNA"/>
</dbReference>
<dbReference type="RefSeq" id="WP_012669652.1">
    <property type="nucleotide sequence ID" value="NC_012225.1"/>
</dbReference>
<dbReference type="SMR" id="C0QWF7"/>
<dbReference type="STRING" id="565034.BHWA1_00096"/>
<dbReference type="KEGG" id="bhy:BHWA1_00096"/>
<dbReference type="eggNOG" id="COG0275">
    <property type="taxonomic scope" value="Bacteria"/>
</dbReference>
<dbReference type="HOGENOM" id="CLU_038422_2_0_12"/>
<dbReference type="Proteomes" id="UP000001803">
    <property type="component" value="Chromosome"/>
</dbReference>
<dbReference type="GO" id="GO:0005737">
    <property type="term" value="C:cytoplasm"/>
    <property type="evidence" value="ECO:0007669"/>
    <property type="project" value="UniProtKB-SubCell"/>
</dbReference>
<dbReference type="GO" id="GO:0071424">
    <property type="term" value="F:rRNA (cytosine-N4-)-methyltransferase activity"/>
    <property type="evidence" value="ECO:0007669"/>
    <property type="project" value="UniProtKB-UniRule"/>
</dbReference>
<dbReference type="GO" id="GO:0070475">
    <property type="term" value="P:rRNA base methylation"/>
    <property type="evidence" value="ECO:0007669"/>
    <property type="project" value="UniProtKB-UniRule"/>
</dbReference>
<dbReference type="Gene3D" id="1.10.150.170">
    <property type="entry name" value="Putative methyltransferase TM0872, insert domain"/>
    <property type="match status" value="1"/>
</dbReference>
<dbReference type="Gene3D" id="3.40.50.150">
    <property type="entry name" value="Vaccinia Virus protein VP39"/>
    <property type="match status" value="1"/>
</dbReference>
<dbReference type="HAMAP" id="MF_01007">
    <property type="entry name" value="16SrRNA_methyltr_H"/>
    <property type="match status" value="1"/>
</dbReference>
<dbReference type="InterPro" id="IPR002903">
    <property type="entry name" value="RsmH"/>
</dbReference>
<dbReference type="InterPro" id="IPR023397">
    <property type="entry name" value="SAM-dep_MeTrfase_MraW_recog"/>
</dbReference>
<dbReference type="InterPro" id="IPR029063">
    <property type="entry name" value="SAM-dependent_MTases_sf"/>
</dbReference>
<dbReference type="NCBIfam" id="TIGR00006">
    <property type="entry name" value="16S rRNA (cytosine(1402)-N(4))-methyltransferase RsmH"/>
    <property type="match status" value="1"/>
</dbReference>
<dbReference type="PANTHER" id="PTHR11265:SF0">
    <property type="entry name" value="12S RRNA N4-METHYLCYTIDINE METHYLTRANSFERASE"/>
    <property type="match status" value="1"/>
</dbReference>
<dbReference type="PANTHER" id="PTHR11265">
    <property type="entry name" value="S-ADENOSYL-METHYLTRANSFERASE MRAW"/>
    <property type="match status" value="1"/>
</dbReference>
<dbReference type="Pfam" id="PF01795">
    <property type="entry name" value="Methyltransf_5"/>
    <property type="match status" value="1"/>
</dbReference>
<dbReference type="PIRSF" id="PIRSF004486">
    <property type="entry name" value="MraW"/>
    <property type="match status" value="1"/>
</dbReference>
<dbReference type="SUPFAM" id="SSF81799">
    <property type="entry name" value="Putative methyltransferase TM0872, insert domain"/>
    <property type="match status" value="1"/>
</dbReference>
<dbReference type="SUPFAM" id="SSF53335">
    <property type="entry name" value="S-adenosyl-L-methionine-dependent methyltransferases"/>
    <property type="match status" value="1"/>
</dbReference>
<evidence type="ECO:0000255" key="1">
    <source>
        <dbReference type="HAMAP-Rule" id="MF_01007"/>
    </source>
</evidence>
<gene>
    <name evidence="1" type="primary">rsmH</name>
    <name type="synonym">mraW</name>
    <name type="ordered locus">BHWA1_00096</name>
</gene>
<sequence length="300" mass="34772">MDNNEELEIVHTPVMLKEVLSFIPENAKIAVDATLGEGGHTKAMLDLNLEVHSFERDSAILEIAKKRLKNYDKFHYYNNTYDKMIEELDDSIIGNVDFMLYDLGVSLFHFKKAERGFSFKDNVRLDMRLGLNEKSAYDVINGYSEEELERVLRDYGEISNARKMANVIVKERNRRKIETSRELENIIFHNTDKSQRYGKIHPATLVFQAIRIEVNDELNILEKSISNIPSILKQNGVVVVMSYHSLEDRIIKKFFKENEKTKNKDGIFKLLNNKVKLPTNEEIKSNPASRSAKMRIAQKV</sequence>
<reference key="1">
    <citation type="journal article" date="2009" name="PLoS ONE">
        <title>Genome sequence of the pathogenic intestinal spirochete Brachyspira hyodysenteriae reveals adaptations to its lifestyle in the porcine large intestine.</title>
        <authorList>
            <person name="Bellgard M.I."/>
            <person name="Wanchanthuek P."/>
            <person name="La T."/>
            <person name="Ryan K."/>
            <person name="Moolhuijzen P."/>
            <person name="Albertyn Z."/>
            <person name="Shaban B."/>
            <person name="Motro Y."/>
            <person name="Dunn D.S."/>
            <person name="Schibeci D."/>
            <person name="Hunter A."/>
            <person name="Barrero R."/>
            <person name="Phillips N.D."/>
            <person name="Hampson D.J."/>
        </authorList>
    </citation>
    <scope>NUCLEOTIDE SEQUENCE [LARGE SCALE GENOMIC DNA]</scope>
    <source>
        <strain>ATCC 49526 / WA1</strain>
    </source>
</reference>
<organism>
    <name type="scientific">Brachyspira hyodysenteriae (strain ATCC 49526 / WA1)</name>
    <dbReference type="NCBI Taxonomy" id="565034"/>
    <lineage>
        <taxon>Bacteria</taxon>
        <taxon>Pseudomonadati</taxon>
        <taxon>Spirochaetota</taxon>
        <taxon>Spirochaetia</taxon>
        <taxon>Brachyspirales</taxon>
        <taxon>Brachyspiraceae</taxon>
        <taxon>Brachyspira</taxon>
    </lineage>
</organism>
<comment type="function">
    <text evidence="1">Specifically methylates the N4 position of cytidine in position 1402 (C1402) of 16S rRNA.</text>
</comment>
<comment type="catalytic activity">
    <reaction evidence="1">
        <text>cytidine(1402) in 16S rRNA + S-adenosyl-L-methionine = N(4)-methylcytidine(1402) in 16S rRNA + S-adenosyl-L-homocysteine + H(+)</text>
        <dbReference type="Rhea" id="RHEA:42928"/>
        <dbReference type="Rhea" id="RHEA-COMP:10286"/>
        <dbReference type="Rhea" id="RHEA-COMP:10287"/>
        <dbReference type="ChEBI" id="CHEBI:15378"/>
        <dbReference type="ChEBI" id="CHEBI:57856"/>
        <dbReference type="ChEBI" id="CHEBI:59789"/>
        <dbReference type="ChEBI" id="CHEBI:74506"/>
        <dbReference type="ChEBI" id="CHEBI:82748"/>
        <dbReference type="EC" id="2.1.1.199"/>
    </reaction>
</comment>
<comment type="subcellular location">
    <subcellularLocation>
        <location evidence="1">Cytoplasm</location>
    </subcellularLocation>
</comment>
<comment type="similarity">
    <text evidence="1">Belongs to the methyltransferase superfamily. RsmH family.</text>
</comment>
<protein>
    <recommendedName>
        <fullName evidence="1">Ribosomal RNA small subunit methyltransferase H</fullName>
        <ecNumber evidence="1">2.1.1.199</ecNumber>
    </recommendedName>
    <alternativeName>
        <fullName evidence="1">16S rRNA m(4)C1402 methyltransferase</fullName>
    </alternativeName>
    <alternativeName>
        <fullName evidence="1">rRNA (cytosine-N(4)-)-methyltransferase RsmH</fullName>
    </alternativeName>
</protein>